<protein>
    <recommendedName>
        <fullName evidence="1">Proline--tRNA ligase</fullName>
        <ecNumber evidence="1">6.1.1.15</ecNumber>
    </recommendedName>
    <alternativeName>
        <fullName evidence="1">Prolyl-tRNA synthetase</fullName>
        <shortName evidence="1">ProRS</shortName>
    </alternativeName>
</protein>
<gene>
    <name evidence="1" type="primary">proS</name>
    <name type="ordered locus">HAPS_1686</name>
</gene>
<accession>B8F7C2</accession>
<name>SYP_GLAP5</name>
<organism>
    <name type="scientific">Glaesserella parasuis serovar 5 (strain SH0165)</name>
    <name type="common">Haemophilus parasuis</name>
    <dbReference type="NCBI Taxonomy" id="557723"/>
    <lineage>
        <taxon>Bacteria</taxon>
        <taxon>Pseudomonadati</taxon>
        <taxon>Pseudomonadota</taxon>
        <taxon>Gammaproteobacteria</taxon>
        <taxon>Pasteurellales</taxon>
        <taxon>Pasteurellaceae</taxon>
        <taxon>Glaesserella</taxon>
    </lineage>
</organism>
<reference key="1">
    <citation type="journal article" date="2009" name="J. Bacteriol.">
        <title>Complete genome sequence of Haemophilus parasuis SH0165.</title>
        <authorList>
            <person name="Yue M."/>
            <person name="Yang F."/>
            <person name="Yang J."/>
            <person name="Bei W."/>
            <person name="Cai X."/>
            <person name="Chen L."/>
            <person name="Dong J."/>
            <person name="Zhou R."/>
            <person name="Jin M."/>
            <person name="Jin Q."/>
            <person name="Chen H."/>
        </authorList>
    </citation>
    <scope>NUCLEOTIDE SEQUENCE [LARGE SCALE GENOMIC DNA]</scope>
    <source>
        <strain>SH0165</strain>
    </source>
</reference>
<sequence>MRTSQYLFSTLKETPNDAQVVSHQLMLRAGMIRPLASGMYNWLPTGLRVLKKVENIIREEMNKSGALEVEMPVVQPADLWVESERWEDYGPELLRFKDRGDRPFVLGPTHEEVITDLVRREVSSYKQLPLNLYQIQTKFRDEVRPRFGVMRGREFLMKDAYSFHTSKESLQETYDVMHQTYSNIFTRLGLDFRPVAADTGSIGGSASHEFQVLAQSGEDDVVFSTESDYAANIELAEAIAVGERQAPTAEMTLVDTPNAKTIAELVEQFNLPIEKTVKTLIVKGASEEQPLVALVIRGDHELNEIKAVKCEEVAEPFEFADEAEIKAKIGAGIGSLGPVNMPIPVIIDRSVALMSDFGAGANIDGKHYFNINWERDVALPKIADLRNVVEGDPSPDGKGTLLIKRGIEVGHIFQLGTKYSEAMKATVQGEDGRPQTMIMGCYGIGVTRVVAAAIEQHHDERGIIWPTDAIAPFTVAVVPMNMHKSESVQTFAEDLYKTLRSQGVDVIFDDRKERPGVMFADMELIGVPHMLVIGEKNLENGEIEYKNRRTGEKQMIAKDQLLDFLKGRINQ</sequence>
<keyword id="KW-0030">Aminoacyl-tRNA synthetase</keyword>
<keyword id="KW-0067">ATP-binding</keyword>
<keyword id="KW-0963">Cytoplasm</keyword>
<keyword id="KW-0436">Ligase</keyword>
<keyword id="KW-0547">Nucleotide-binding</keyword>
<keyword id="KW-0648">Protein biosynthesis</keyword>
<keyword id="KW-1185">Reference proteome</keyword>
<evidence type="ECO:0000255" key="1">
    <source>
        <dbReference type="HAMAP-Rule" id="MF_01569"/>
    </source>
</evidence>
<proteinExistence type="inferred from homology"/>
<comment type="function">
    <text evidence="1">Catalyzes the attachment of proline to tRNA(Pro) in a two-step reaction: proline is first activated by ATP to form Pro-AMP and then transferred to the acceptor end of tRNA(Pro). As ProRS can inadvertently accommodate and process non-cognate amino acids such as alanine and cysteine, to avoid such errors it has two additional distinct editing activities against alanine. One activity is designated as 'pretransfer' editing and involves the tRNA(Pro)-independent hydrolysis of activated Ala-AMP. The other activity is designated 'posttransfer' editing and involves deacylation of mischarged Ala-tRNA(Pro). The misacylated Cys-tRNA(Pro) is not edited by ProRS.</text>
</comment>
<comment type="catalytic activity">
    <reaction evidence="1">
        <text>tRNA(Pro) + L-proline + ATP = L-prolyl-tRNA(Pro) + AMP + diphosphate</text>
        <dbReference type="Rhea" id="RHEA:14305"/>
        <dbReference type="Rhea" id="RHEA-COMP:9700"/>
        <dbReference type="Rhea" id="RHEA-COMP:9702"/>
        <dbReference type="ChEBI" id="CHEBI:30616"/>
        <dbReference type="ChEBI" id="CHEBI:33019"/>
        <dbReference type="ChEBI" id="CHEBI:60039"/>
        <dbReference type="ChEBI" id="CHEBI:78442"/>
        <dbReference type="ChEBI" id="CHEBI:78532"/>
        <dbReference type="ChEBI" id="CHEBI:456215"/>
        <dbReference type="EC" id="6.1.1.15"/>
    </reaction>
</comment>
<comment type="subunit">
    <text evidence="1">Homodimer.</text>
</comment>
<comment type="subcellular location">
    <subcellularLocation>
        <location evidence="1">Cytoplasm</location>
    </subcellularLocation>
</comment>
<comment type="domain">
    <text evidence="1">Consists of three domains: the N-terminal catalytic domain, the editing domain and the C-terminal anticodon-binding domain.</text>
</comment>
<comment type="similarity">
    <text evidence="1">Belongs to the class-II aminoacyl-tRNA synthetase family. ProS type 1 subfamily.</text>
</comment>
<dbReference type="EC" id="6.1.1.15" evidence="1"/>
<dbReference type="EMBL" id="CP001321">
    <property type="protein sequence ID" value="ACL33224.1"/>
    <property type="molecule type" value="Genomic_DNA"/>
</dbReference>
<dbReference type="RefSeq" id="WP_005713523.1">
    <property type="nucleotide sequence ID" value="NC_011852.1"/>
</dbReference>
<dbReference type="SMR" id="B8F7C2"/>
<dbReference type="STRING" id="557723.HAPS_1686"/>
<dbReference type="GeneID" id="66619835"/>
<dbReference type="KEGG" id="hap:HAPS_1686"/>
<dbReference type="HOGENOM" id="CLU_016739_0_0_6"/>
<dbReference type="Proteomes" id="UP000006743">
    <property type="component" value="Chromosome"/>
</dbReference>
<dbReference type="GO" id="GO:0005829">
    <property type="term" value="C:cytosol"/>
    <property type="evidence" value="ECO:0007669"/>
    <property type="project" value="TreeGrafter"/>
</dbReference>
<dbReference type="GO" id="GO:0002161">
    <property type="term" value="F:aminoacyl-tRNA deacylase activity"/>
    <property type="evidence" value="ECO:0007669"/>
    <property type="project" value="InterPro"/>
</dbReference>
<dbReference type="GO" id="GO:0005524">
    <property type="term" value="F:ATP binding"/>
    <property type="evidence" value="ECO:0007669"/>
    <property type="project" value="UniProtKB-UniRule"/>
</dbReference>
<dbReference type="GO" id="GO:0004827">
    <property type="term" value="F:proline-tRNA ligase activity"/>
    <property type="evidence" value="ECO:0007669"/>
    <property type="project" value="UniProtKB-UniRule"/>
</dbReference>
<dbReference type="GO" id="GO:0006433">
    <property type="term" value="P:prolyl-tRNA aminoacylation"/>
    <property type="evidence" value="ECO:0007669"/>
    <property type="project" value="UniProtKB-UniRule"/>
</dbReference>
<dbReference type="CDD" id="cd04334">
    <property type="entry name" value="ProRS-INS"/>
    <property type="match status" value="1"/>
</dbReference>
<dbReference type="CDD" id="cd00861">
    <property type="entry name" value="ProRS_anticodon_short"/>
    <property type="match status" value="1"/>
</dbReference>
<dbReference type="CDD" id="cd00779">
    <property type="entry name" value="ProRS_core_prok"/>
    <property type="match status" value="1"/>
</dbReference>
<dbReference type="FunFam" id="3.30.930.10:FF:000043">
    <property type="entry name" value="Proline--tRNA ligase"/>
    <property type="match status" value="1"/>
</dbReference>
<dbReference type="FunFam" id="3.30.930.10:FF:000097">
    <property type="entry name" value="Proline--tRNA ligase"/>
    <property type="match status" value="1"/>
</dbReference>
<dbReference type="FunFam" id="3.40.50.800:FF:000006">
    <property type="entry name" value="Proline--tRNA ligase"/>
    <property type="match status" value="1"/>
</dbReference>
<dbReference type="FunFam" id="3.90.960.10:FF:000001">
    <property type="entry name" value="Proline--tRNA ligase"/>
    <property type="match status" value="1"/>
</dbReference>
<dbReference type="Gene3D" id="3.40.50.800">
    <property type="entry name" value="Anticodon-binding domain"/>
    <property type="match status" value="1"/>
</dbReference>
<dbReference type="Gene3D" id="3.30.930.10">
    <property type="entry name" value="Bira Bifunctional Protein, Domain 2"/>
    <property type="match status" value="2"/>
</dbReference>
<dbReference type="HAMAP" id="MF_01569">
    <property type="entry name" value="Pro_tRNA_synth_type1"/>
    <property type="match status" value="1"/>
</dbReference>
<dbReference type="InterPro" id="IPR002314">
    <property type="entry name" value="aa-tRNA-synt_IIb"/>
</dbReference>
<dbReference type="InterPro" id="IPR006195">
    <property type="entry name" value="aa-tRNA-synth_II"/>
</dbReference>
<dbReference type="InterPro" id="IPR045864">
    <property type="entry name" value="aa-tRNA-synth_II/BPL/LPL"/>
</dbReference>
<dbReference type="InterPro" id="IPR004154">
    <property type="entry name" value="Anticodon-bd"/>
</dbReference>
<dbReference type="InterPro" id="IPR036621">
    <property type="entry name" value="Anticodon-bd_dom_sf"/>
</dbReference>
<dbReference type="InterPro" id="IPR002316">
    <property type="entry name" value="Pro-tRNA-ligase_IIa"/>
</dbReference>
<dbReference type="InterPro" id="IPR004500">
    <property type="entry name" value="Pro-tRNA-synth_IIa_bac-type"/>
</dbReference>
<dbReference type="InterPro" id="IPR023717">
    <property type="entry name" value="Pro-tRNA-Synthase_IIa_type1"/>
</dbReference>
<dbReference type="InterPro" id="IPR050062">
    <property type="entry name" value="Pro-tRNA_synthetase"/>
</dbReference>
<dbReference type="InterPro" id="IPR044140">
    <property type="entry name" value="ProRS_anticodon_short"/>
</dbReference>
<dbReference type="InterPro" id="IPR033730">
    <property type="entry name" value="ProRS_core_prok"/>
</dbReference>
<dbReference type="InterPro" id="IPR036754">
    <property type="entry name" value="YbaK/aa-tRNA-synt-asso_dom_sf"/>
</dbReference>
<dbReference type="InterPro" id="IPR007214">
    <property type="entry name" value="YbaK/aa-tRNA-synth-assoc-dom"/>
</dbReference>
<dbReference type="NCBIfam" id="NF006625">
    <property type="entry name" value="PRK09194.1"/>
    <property type="match status" value="1"/>
</dbReference>
<dbReference type="NCBIfam" id="TIGR00409">
    <property type="entry name" value="proS_fam_II"/>
    <property type="match status" value="1"/>
</dbReference>
<dbReference type="PANTHER" id="PTHR42753">
    <property type="entry name" value="MITOCHONDRIAL RIBOSOME PROTEIN L39/PROLYL-TRNA LIGASE FAMILY MEMBER"/>
    <property type="match status" value="1"/>
</dbReference>
<dbReference type="PANTHER" id="PTHR42753:SF2">
    <property type="entry name" value="PROLINE--TRNA LIGASE"/>
    <property type="match status" value="1"/>
</dbReference>
<dbReference type="Pfam" id="PF03129">
    <property type="entry name" value="HGTP_anticodon"/>
    <property type="match status" value="1"/>
</dbReference>
<dbReference type="Pfam" id="PF00587">
    <property type="entry name" value="tRNA-synt_2b"/>
    <property type="match status" value="1"/>
</dbReference>
<dbReference type="Pfam" id="PF04073">
    <property type="entry name" value="tRNA_edit"/>
    <property type="match status" value="1"/>
</dbReference>
<dbReference type="PIRSF" id="PIRSF001535">
    <property type="entry name" value="ProRS_1"/>
    <property type="match status" value="1"/>
</dbReference>
<dbReference type="PRINTS" id="PR01046">
    <property type="entry name" value="TRNASYNTHPRO"/>
</dbReference>
<dbReference type="SUPFAM" id="SSF52954">
    <property type="entry name" value="Class II aaRS ABD-related"/>
    <property type="match status" value="1"/>
</dbReference>
<dbReference type="SUPFAM" id="SSF55681">
    <property type="entry name" value="Class II aaRS and biotin synthetases"/>
    <property type="match status" value="1"/>
</dbReference>
<dbReference type="SUPFAM" id="SSF55826">
    <property type="entry name" value="YbaK/ProRS associated domain"/>
    <property type="match status" value="1"/>
</dbReference>
<dbReference type="PROSITE" id="PS50862">
    <property type="entry name" value="AA_TRNA_LIGASE_II"/>
    <property type="match status" value="1"/>
</dbReference>
<feature type="chain" id="PRO_1000185503" description="Proline--tRNA ligase">
    <location>
        <begin position="1"/>
        <end position="571"/>
    </location>
</feature>